<evidence type="ECO:0000255" key="1">
    <source>
        <dbReference type="HAMAP-Rule" id="MF_00094"/>
    </source>
</evidence>
<proteinExistence type="inferred from homology"/>
<gene>
    <name evidence="1" type="primary">prfB</name>
    <name type="ordered locus">SUN_0317</name>
</gene>
<organism>
    <name type="scientific">Sulfurovum sp. (strain NBC37-1)</name>
    <dbReference type="NCBI Taxonomy" id="387093"/>
    <lineage>
        <taxon>Bacteria</taxon>
        <taxon>Pseudomonadati</taxon>
        <taxon>Campylobacterota</taxon>
        <taxon>Epsilonproteobacteria</taxon>
        <taxon>Campylobacterales</taxon>
        <taxon>Sulfurovaceae</taxon>
        <taxon>Sulfurovum</taxon>
    </lineage>
</organism>
<reference key="1">
    <citation type="journal article" date="2007" name="Proc. Natl. Acad. Sci. U.S.A.">
        <title>Deep-sea vent epsilon-proteobacterial genomes provide insights into emergence of pathogens.</title>
        <authorList>
            <person name="Nakagawa S."/>
            <person name="Takaki Y."/>
            <person name="Shimamura S."/>
            <person name="Reysenbach A.-L."/>
            <person name="Takai K."/>
            <person name="Horikoshi K."/>
        </authorList>
    </citation>
    <scope>NUCLEOTIDE SEQUENCE [LARGE SCALE GENOMIC DNA]</scope>
    <source>
        <strain>NBC37-1</strain>
    </source>
</reference>
<comment type="function">
    <text evidence="1">Peptide chain release factor 2 directs the termination of translation in response to the peptide chain termination codons UGA and UAA.</text>
</comment>
<comment type="subcellular location">
    <subcellularLocation>
        <location evidence="1">Cytoplasm</location>
    </subcellularLocation>
</comment>
<comment type="PTM">
    <text evidence="1">Methylated by PrmC. Methylation increases the termination efficiency of RF2.</text>
</comment>
<comment type="similarity">
    <text evidence="1">Belongs to the prokaryotic/mitochondrial release factor family.</text>
</comment>
<name>RF2_SULNB</name>
<protein>
    <recommendedName>
        <fullName evidence="1">Peptide chain release factor 2</fullName>
        <shortName evidence="1">RF-2</shortName>
    </recommendedName>
</protein>
<dbReference type="EMBL" id="AP009179">
    <property type="protein sequence ID" value="BAF71277.1"/>
    <property type="molecule type" value="Genomic_DNA"/>
</dbReference>
<dbReference type="RefSeq" id="WP_011980010.1">
    <property type="nucleotide sequence ID" value="NC_009663.1"/>
</dbReference>
<dbReference type="SMR" id="A6Q718"/>
<dbReference type="STRING" id="387093.SUN_0317"/>
<dbReference type="KEGG" id="sun:SUN_0317"/>
<dbReference type="eggNOG" id="COG1186">
    <property type="taxonomic scope" value="Bacteria"/>
</dbReference>
<dbReference type="HOGENOM" id="CLU_036856_6_0_7"/>
<dbReference type="OrthoDB" id="9806673at2"/>
<dbReference type="Proteomes" id="UP000006378">
    <property type="component" value="Chromosome"/>
</dbReference>
<dbReference type="GO" id="GO:0005737">
    <property type="term" value="C:cytoplasm"/>
    <property type="evidence" value="ECO:0007669"/>
    <property type="project" value="UniProtKB-SubCell"/>
</dbReference>
<dbReference type="GO" id="GO:0016149">
    <property type="term" value="F:translation release factor activity, codon specific"/>
    <property type="evidence" value="ECO:0007669"/>
    <property type="project" value="UniProtKB-UniRule"/>
</dbReference>
<dbReference type="FunFam" id="3.30.160.20:FF:000010">
    <property type="entry name" value="Peptide chain release factor 2"/>
    <property type="match status" value="1"/>
</dbReference>
<dbReference type="Gene3D" id="3.30.160.20">
    <property type="match status" value="1"/>
</dbReference>
<dbReference type="Gene3D" id="3.30.70.1660">
    <property type="match status" value="1"/>
</dbReference>
<dbReference type="Gene3D" id="1.20.58.410">
    <property type="entry name" value="Release factor"/>
    <property type="match status" value="1"/>
</dbReference>
<dbReference type="HAMAP" id="MF_00094">
    <property type="entry name" value="Rel_fac_2"/>
    <property type="match status" value="1"/>
</dbReference>
<dbReference type="InterPro" id="IPR005139">
    <property type="entry name" value="PCRF"/>
</dbReference>
<dbReference type="InterPro" id="IPR000352">
    <property type="entry name" value="Pep_chain_release_fac_I"/>
</dbReference>
<dbReference type="InterPro" id="IPR045853">
    <property type="entry name" value="Pep_chain_release_fac_I_sf"/>
</dbReference>
<dbReference type="InterPro" id="IPR004374">
    <property type="entry name" value="PrfB"/>
</dbReference>
<dbReference type="NCBIfam" id="TIGR00020">
    <property type="entry name" value="prfB"/>
    <property type="match status" value="1"/>
</dbReference>
<dbReference type="PANTHER" id="PTHR43116:SF3">
    <property type="entry name" value="CLASS I PEPTIDE CHAIN RELEASE FACTOR"/>
    <property type="match status" value="1"/>
</dbReference>
<dbReference type="PANTHER" id="PTHR43116">
    <property type="entry name" value="PEPTIDE CHAIN RELEASE FACTOR 2"/>
    <property type="match status" value="1"/>
</dbReference>
<dbReference type="Pfam" id="PF03462">
    <property type="entry name" value="PCRF"/>
    <property type="match status" value="1"/>
</dbReference>
<dbReference type="Pfam" id="PF00472">
    <property type="entry name" value="RF-1"/>
    <property type="match status" value="1"/>
</dbReference>
<dbReference type="SMART" id="SM00937">
    <property type="entry name" value="PCRF"/>
    <property type="match status" value="1"/>
</dbReference>
<dbReference type="SUPFAM" id="SSF75620">
    <property type="entry name" value="Release factor"/>
    <property type="match status" value="1"/>
</dbReference>
<dbReference type="PROSITE" id="PS00745">
    <property type="entry name" value="RF_PROK_I"/>
    <property type="match status" value="1"/>
</dbReference>
<feature type="chain" id="PRO_1000005016" description="Peptide chain release factor 2">
    <location>
        <begin position="1"/>
        <end position="364"/>
    </location>
</feature>
<feature type="modified residue" description="N5-methylglutamine" evidence="1">
    <location>
        <position position="251"/>
    </location>
</feature>
<keyword id="KW-0963">Cytoplasm</keyword>
<keyword id="KW-0488">Methylation</keyword>
<keyword id="KW-0648">Protein biosynthesis</keyword>
<accession>A6Q718</accession>
<sequence>MDAYEYGELLKTLSKKMENISNIVKPDELKKRLDEIEEMQQDPNFWNDTANAGKISQEKTRTERILETYHNANDAVYDAIEYFEMAKAEKDEETLEMLYEDAETLKERTNALEVQMMLSGEHDSNNAIVSIHPGAGGTESQDWASMLYRMYLRWAERHGFKVEVLDYQPGEEAGIKDVSFIIKGENAYGYLKVENGIHRLVRISPFDSNAKRHTSFTSVMVSPEIDDDIDIEIEDKDLRIDTYRASGAGGQHVNKTESAIRITHEPTGIVVQCQNDRSQHKNKSAAMKMLKSRLYEYEMAKKQAEIDGVEKSDIGWGHQIRSYVMQPYQQVKDTRSGQAFTNVDAILDGDIDKLLEGVLISQAK</sequence>